<sequence length="280" mass="30484">MALKSYKPTTPGQRGLVLIDRSELWKGRPVKALTEGLSKHGGRNNTGRITMRRKGGGAKRLYRIVDFKRNKMDVAATVERIEYDPNRTAFIALVKYEDGEQAYILAPQRLAVGDTVVASQKADIKPGNAMPFSGMPIGTIIHNIEMKPGKGGQIARAAGTYAQFVGRDGGYAQIRLSSGELRLVRQECMATVGAVSNPDNSNQNYGKAGRMRHKGVRPSVRGVVMNPIDHPHGGGEGRTSGGRHPVTPWGKPTKGAKTRNKKKASSQLIIRSRHAKKKGR</sequence>
<feature type="chain" id="PRO_0000310003" description="Large ribosomal subunit protein uL2">
    <location>
        <begin position="1"/>
        <end position="280"/>
    </location>
</feature>
<feature type="region of interest" description="Disordered" evidence="2">
    <location>
        <begin position="226"/>
        <end position="280"/>
    </location>
</feature>
<feature type="compositionally biased region" description="Basic residues" evidence="2">
    <location>
        <begin position="254"/>
        <end position="264"/>
    </location>
</feature>
<feature type="compositionally biased region" description="Basic residues" evidence="2">
    <location>
        <begin position="271"/>
        <end position="280"/>
    </location>
</feature>
<evidence type="ECO:0000255" key="1">
    <source>
        <dbReference type="HAMAP-Rule" id="MF_01320"/>
    </source>
</evidence>
<evidence type="ECO:0000256" key="2">
    <source>
        <dbReference type="SAM" id="MobiDB-lite"/>
    </source>
</evidence>
<evidence type="ECO:0000305" key="3"/>
<name>RL2_ROSDO</name>
<gene>
    <name evidence="1" type="primary">rplB</name>
    <name type="ordered locus">RD1_1405</name>
</gene>
<organism>
    <name type="scientific">Roseobacter denitrificans (strain ATCC 33942 / OCh 114)</name>
    <name type="common">Erythrobacter sp. (strain OCh 114)</name>
    <name type="synonym">Roseobacter denitrificans</name>
    <dbReference type="NCBI Taxonomy" id="375451"/>
    <lineage>
        <taxon>Bacteria</taxon>
        <taxon>Pseudomonadati</taxon>
        <taxon>Pseudomonadota</taxon>
        <taxon>Alphaproteobacteria</taxon>
        <taxon>Rhodobacterales</taxon>
        <taxon>Roseobacteraceae</taxon>
        <taxon>Roseobacter</taxon>
    </lineage>
</organism>
<accession>Q16AE8</accession>
<dbReference type="EMBL" id="CP000362">
    <property type="protein sequence ID" value="ABG31045.1"/>
    <property type="molecule type" value="Genomic_DNA"/>
</dbReference>
<dbReference type="RefSeq" id="WP_011567665.1">
    <property type="nucleotide sequence ID" value="NC_008209.1"/>
</dbReference>
<dbReference type="SMR" id="Q16AE8"/>
<dbReference type="STRING" id="375451.RD1_1405"/>
<dbReference type="KEGG" id="rde:RD1_1405"/>
<dbReference type="eggNOG" id="COG0090">
    <property type="taxonomic scope" value="Bacteria"/>
</dbReference>
<dbReference type="HOGENOM" id="CLU_036235_2_1_5"/>
<dbReference type="OrthoDB" id="9778722at2"/>
<dbReference type="Proteomes" id="UP000007029">
    <property type="component" value="Chromosome"/>
</dbReference>
<dbReference type="GO" id="GO:0015934">
    <property type="term" value="C:large ribosomal subunit"/>
    <property type="evidence" value="ECO:0007669"/>
    <property type="project" value="InterPro"/>
</dbReference>
<dbReference type="GO" id="GO:0019843">
    <property type="term" value="F:rRNA binding"/>
    <property type="evidence" value="ECO:0007669"/>
    <property type="project" value="UniProtKB-UniRule"/>
</dbReference>
<dbReference type="GO" id="GO:0003735">
    <property type="term" value="F:structural constituent of ribosome"/>
    <property type="evidence" value="ECO:0007669"/>
    <property type="project" value="InterPro"/>
</dbReference>
<dbReference type="GO" id="GO:0016740">
    <property type="term" value="F:transferase activity"/>
    <property type="evidence" value="ECO:0007669"/>
    <property type="project" value="InterPro"/>
</dbReference>
<dbReference type="GO" id="GO:0002181">
    <property type="term" value="P:cytoplasmic translation"/>
    <property type="evidence" value="ECO:0007669"/>
    <property type="project" value="TreeGrafter"/>
</dbReference>
<dbReference type="FunFam" id="2.30.30.30:FF:000001">
    <property type="entry name" value="50S ribosomal protein L2"/>
    <property type="match status" value="1"/>
</dbReference>
<dbReference type="FunFam" id="2.40.50.140:FF:000003">
    <property type="entry name" value="50S ribosomal protein L2"/>
    <property type="match status" value="1"/>
</dbReference>
<dbReference type="FunFam" id="4.10.950.10:FF:000001">
    <property type="entry name" value="50S ribosomal protein L2"/>
    <property type="match status" value="1"/>
</dbReference>
<dbReference type="Gene3D" id="2.30.30.30">
    <property type="match status" value="1"/>
</dbReference>
<dbReference type="Gene3D" id="2.40.50.140">
    <property type="entry name" value="Nucleic acid-binding proteins"/>
    <property type="match status" value="1"/>
</dbReference>
<dbReference type="Gene3D" id="4.10.950.10">
    <property type="entry name" value="Ribosomal protein L2, domain 3"/>
    <property type="match status" value="1"/>
</dbReference>
<dbReference type="HAMAP" id="MF_01320_B">
    <property type="entry name" value="Ribosomal_uL2_B"/>
    <property type="match status" value="1"/>
</dbReference>
<dbReference type="InterPro" id="IPR012340">
    <property type="entry name" value="NA-bd_OB-fold"/>
</dbReference>
<dbReference type="InterPro" id="IPR014722">
    <property type="entry name" value="Rib_uL2_dom2"/>
</dbReference>
<dbReference type="InterPro" id="IPR002171">
    <property type="entry name" value="Ribosomal_uL2"/>
</dbReference>
<dbReference type="InterPro" id="IPR005880">
    <property type="entry name" value="Ribosomal_uL2_bac/org-type"/>
</dbReference>
<dbReference type="InterPro" id="IPR022669">
    <property type="entry name" value="Ribosomal_uL2_C"/>
</dbReference>
<dbReference type="InterPro" id="IPR022671">
    <property type="entry name" value="Ribosomal_uL2_CS"/>
</dbReference>
<dbReference type="InterPro" id="IPR014726">
    <property type="entry name" value="Ribosomal_uL2_dom3"/>
</dbReference>
<dbReference type="InterPro" id="IPR022666">
    <property type="entry name" value="Ribosomal_uL2_RNA-bd_dom"/>
</dbReference>
<dbReference type="InterPro" id="IPR008991">
    <property type="entry name" value="Translation_prot_SH3-like_sf"/>
</dbReference>
<dbReference type="NCBIfam" id="TIGR01171">
    <property type="entry name" value="rplB_bact"/>
    <property type="match status" value="1"/>
</dbReference>
<dbReference type="PANTHER" id="PTHR13691:SF5">
    <property type="entry name" value="LARGE RIBOSOMAL SUBUNIT PROTEIN UL2M"/>
    <property type="match status" value="1"/>
</dbReference>
<dbReference type="PANTHER" id="PTHR13691">
    <property type="entry name" value="RIBOSOMAL PROTEIN L2"/>
    <property type="match status" value="1"/>
</dbReference>
<dbReference type="Pfam" id="PF00181">
    <property type="entry name" value="Ribosomal_L2"/>
    <property type="match status" value="1"/>
</dbReference>
<dbReference type="Pfam" id="PF03947">
    <property type="entry name" value="Ribosomal_L2_C"/>
    <property type="match status" value="1"/>
</dbReference>
<dbReference type="PIRSF" id="PIRSF002158">
    <property type="entry name" value="Ribosomal_L2"/>
    <property type="match status" value="1"/>
</dbReference>
<dbReference type="SMART" id="SM01383">
    <property type="entry name" value="Ribosomal_L2"/>
    <property type="match status" value="1"/>
</dbReference>
<dbReference type="SMART" id="SM01382">
    <property type="entry name" value="Ribosomal_L2_C"/>
    <property type="match status" value="1"/>
</dbReference>
<dbReference type="SUPFAM" id="SSF50249">
    <property type="entry name" value="Nucleic acid-binding proteins"/>
    <property type="match status" value="1"/>
</dbReference>
<dbReference type="SUPFAM" id="SSF50104">
    <property type="entry name" value="Translation proteins SH3-like domain"/>
    <property type="match status" value="1"/>
</dbReference>
<dbReference type="PROSITE" id="PS00467">
    <property type="entry name" value="RIBOSOMAL_L2"/>
    <property type="match status" value="1"/>
</dbReference>
<comment type="function">
    <text evidence="1">One of the primary rRNA binding proteins. Required for association of the 30S and 50S subunits to form the 70S ribosome, for tRNA binding and peptide bond formation. It has been suggested to have peptidyltransferase activity; this is somewhat controversial. Makes several contacts with the 16S rRNA in the 70S ribosome.</text>
</comment>
<comment type="subunit">
    <text evidence="1">Part of the 50S ribosomal subunit. Forms a bridge to the 30S subunit in the 70S ribosome.</text>
</comment>
<comment type="similarity">
    <text evidence="1">Belongs to the universal ribosomal protein uL2 family.</text>
</comment>
<keyword id="KW-1185">Reference proteome</keyword>
<keyword id="KW-0687">Ribonucleoprotein</keyword>
<keyword id="KW-0689">Ribosomal protein</keyword>
<keyword id="KW-0694">RNA-binding</keyword>
<keyword id="KW-0699">rRNA-binding</keyword>
<proteinExistence type="inferred from homology"/>
<protein>
    <recommendedName>
        <fullName evidence="1">Large ribosomal subunit protein uL2</fullName>
    </recommendedName>
    <alternativeName>
        <fullName evidence="3">50S ribosomal protein L2</fullName>
    </alternativeName>
</protein>
<reference key="1">
    <citation type="journal article" date="2007" name="J. Bacteriol.">
        <title>The complete genome sequence of Roseobacter denitrificans reveals a mixotrophic rather than photosynthetic metabolism.</title>
        <authorList>
            <person name="Swingley W.D."/>
            <person name="Sadekar S."/>
            <person name="Mastrian S.D."/>
            <person name="Matthies H.J."/>
            <person name="Hao J."/>
            <person name="Ramos H."/>
            <person name="Acharya C.R."/>
            <person name="Conrad A.L."/>
            <person name="Taylor H.L."/>
            <person name="Dejesa L.C."/>
            <person name="Shah M.K."/>
            <person name="O'Huallachain M.E."/>
            <person name="Lince M.T."/>
            <person name="Blankenship R.E."/>
            <person name="Beatty J.T."/>
            <person name="Touchman J.W."/>
        </authorList>
    </citation>
    <scope>NUCLEOTIDE SEQUENCE [LARGE SCALE GENOMIC DNA]</scope>
    <source>
        <strain>ATCC 33942 / OCh 114</strain>
    </source>
</reference>